<dbReference type="EMBL" id="L42023">
    <property type="protein sequence ID" value="AAC21860.1"/>
    <property type="molecule type" value="Genomic_DNA"/>
</dbReference>
<dbReference type="PIR" id="C64053">
    <property type="entry name" value="C64053"/>
</dbReference>
<dbReference type="RefSeq" id="NP_438360.1">
    <property type="nucleotide sequence ID" value="NC_000907.1"/>
</dbReference>
<dbReference type="SMR" id="P44562"/>
<dbReference type="STRING" id="71421.HI_0191"/>
<dbReference type="EnsemblBacteria" id="AAC21860">
    <property type="protein sequence ID" value="AAC21860"/>
    <property type="gene ID" value="HI_0191"/>
</dbReference>
<dbReference type="KEGG" id="hin:HI_0191"/>
<dbReference type="PATRIC" id="fig|71421.8.peg.196"/>
<dbReference type="eggNOG" id="COG0716">
    <property type="taxonomic scope" value="Bacteria"/>
</dbReference>
<dbReference type="HOGENOM" id="CLU_051402_1_1_6"/>
<dbReference type="OrthoDB" id="359268at2"/>
<dbReference type="PhylomeDB" id="P44562"/>
<dbReference type="BioCyc" id="HINF71421:G1GJ1-202-MONOMER"/>
<dbReference type="Proteomes" id="UP000000579">
    <property type="component" value="Chromosome"/>
</dbReference>
<dbReference type="GO" id="GO:0009055">
    <property type="term" value="F:electron transfer activity"/>
    <property type="evidence" value="ECO:0007669"/>
    <property type="project" value="InterPro"/>
</dbReference>
<dbReference type="GO" id="GO:0010181">
    <property type="term" value="F:FMN binding"/>
    <property type="evidence" value="ECO:0007669"/>
    <property type="project" value="InterPro"/>
</dbReference>
<dbReference type="Gene3D" id="3.40.50.360">
    <property type="match status" value="1"/>
</dbReference>
<dbReference type="InterPro" id="IPR050619">
    <property type="entry name" value="Flavodoxin"/>
</dbReference>
<dbReference type="InterPro" id="IPR008254">
    <property type="entry name" value="Flavodoxin/NO_synth"/>
</dbReference>
<dbReference type="InterPro" id="IPR001226">
    <property type="entry name" value="Flavodoxin_CS"/>
</dbReference>
<dbReference type="InterPro" id="IPR010086">
    <property type="entry name" value="Flavodoxin_lc"/>
</dbReference>
<dbReference type="InterPro" id="IPR029039">
    <property type="entry name" value="Flavoprotein-like_sf"/>
</dbReference>
<dbReference type="NCBIfam" id="TIGR01752">
    <property type="entry name" value="flav_long"/>
    <property type="match status" value="1"/>
</dbReference>
<dbReference type="NCBIfam" id="NF006735">
    <property type="entry name" value="PRK09267.1-1"/>
    <property type="match status" value="1"/>
</dbReference>
<dbReference type="NCBIfam" id="NF006737">
    <property type="entry name" value="PRK09267.1-3"/>
    <property type="match status" value="1"/>
</dbReference>
<dbReference type="NCBIfam" id="NF006739">
    <property type="entry name" value="PRK09267.1-5"/>
    <property type="match status" value="1"/>
</dbReference>
<dbReference type="PANTHER" id="PTHR42809:SF1">
    <property type="entry name" value="FLAVODOXIN 1"/>
    <property type="match status" value="1"/>
</dbReference>
<dbReference type="PANTHER" id="PTHR42809">
    <property type="entry name" value="FLAVODOXIN 2"/>
    <property type="match status" value="1"/>
</dbReference>
<dbReference type="Pfam" id="PF00258">
    <property type="entry name" value="Flavodoxin_1"/>
    <property type="match status" value="1"/>
</dbReference>
<dbReference type="PIRSF" id="PIRSF038996">
    <property type="entry name" value="FldA"/>
    <property type="match status" value="1"/>
</dbReference>
<dbReference type="SUPFAM" id="SSF52218">
    <property type="entry name" value="Flavoproteins"/>
    <property type="match status" value="1"/>
</dbReference>
<dbReference type="PROSITE" id="PS00201">
    <property type="entry name" value="FLAVODOXIN"/>
    <property type="match status" value="1"/>
</dbReference>
<dbReference type="PROSITE" id="PS50902">
    <property type="entry name" value="FLAVODOXIN_LIKE"/>
    <property type="match status" value="1"/>
</dbReference>
<gene>
    <name type="primary">fldA</name>
    <name type="ordered locus">HI_0191</name>
</gene>
<reference key="1">
    <citation type="journal article" date="1995" name="Science">
        <title>Whole-genome random sequencing and assembly of Haemophilus influenzae Rd.</title>
        <authorList>
            <person name="Fleischmann R.D."/>
            <person name="Adams M.D."/>
            <person name="White O."/>
            <person name="Clayton R.A."/>
            <person name="Kirkness E.F."/>
            <person name="Kerlavage A.R."/>
            <person name="Bult C.J."/>
            <person name="Tomb J.-F."/>
            <person name="Dougherty B.A."/>
            <person name="Merrick J.M."/>
            <person name="McKenney K."/>
            <person name="Sutton G.G."/>
            <person name="FitzHugh W."/>
            <person name="Fields C.A."/>
            <person name="Gocayne J.D."/>
            <person name="Scott J.D."/>
            <person name="Shirley R."/>
            <person name="Liu L.-I."/>
            <person name="Glodek A."/>
            <person name="Kelley J.M."/>
            <person name="Weidman J.F."/>
            <person name="Phillips C.A."/>
            <person name="Spriggs T."/>
            <person name="Hedblom E."/>
            <person name="Cotton M.D."/>
            <person name="Utterback T.R."/>
            <person name="Hanna M.C."/>
            <person name="Nguyen D.T."/>
            <person name="Saudek D.M."/>
            <person name="Brandon R.C."/>
            <person name="Fine L.D."/>
            <person name="Fritchman J.L."/>
            <person name="Fuhrmann J.L."/>
            <person name="Geoghagen N.S.M."/>
            <person name="Gnehm C.L."/>
            <person name="McDonald L.A."/>
            <person name="Small K.V."/>
            <person name="Fraser C.M."/>
            <person name="Smith H.O."/>
            <person name="Venter J.C."/>
        </authorList>
    </citation>
    <scope>NUCLEOTIDE SEQUENCE [LARGE SCALE GENOMIC DNA]</scope>
    <source>
        <strain>ATCC 51907 / DSM 11121 / KW20 / Rd</strain>
    </source>
</reference>
<sequence>MAIVGLFYGSDTGNTENIAKQIQKQLGSDLIDIRDIAKSSKEDIEAYDFLLFGIPTWYYGEAQADWDDFFPTLEEIDFTDKLVGIFGCGDQEDYADYFCDAIGTVRDIIEPHGAIVVGNWPTEGYNFEASKALLEDGTFIGLCIDEDRQPELTAERVEKWCKQIYDEMCLAELA</sequence>
<feature type="initiator methionine" description="Removed" evidence="1">
    <location>
        <position position="1"/>
    </location>
</feature>
<feature type="chain" id="PRO_0000171633" description="Flavodoxin">
    <location>
        <begin position="2"/>
        <end position="174"/>
    </location>
</feature>
<feature type="domain" description="Flavodoxin-like" evidence="2">
    <location>
        <begin position="4"/>
        <end position="165"/>
    </location>
</feature>
<organism>
    <name type="scientific">Haemophilus influenzae (strain ATCC 51907 / DSM 11121 / KW20 / Rd)</name>
    <dbReference type="NCBI Taxonomy" id="71421"/>
    <lineage>
        <taxon>Bacteria</taxon>
        <taxon>Pseudomonadati</taxon>
        <taxon>Pseudomonadota</taxon>
        <taxon>Gammaproteobacteria</taxon>
        <taxon>Pasteurellales</taxon>
        <taxon>Pasteurellaceae</taxon>
        <taxon>Haemophilus</taxon>
    </lineage>
</organism>
<comment type="function">
    <text evidence="1">Low-potential electron donor to a number of redox enzymes.</text>
</comment>
<comment type="cofactor">
    <cofactor evidence="1">
        <name>FMN</name>
        <dbReference type="ChEBI" id="CHEBI:58210"/>
    </cofactor>
</comment>
<comment type="similarity">
    <text evidence="3">Belongs to the flavodoxin family.</text>
</comment>
<evidence type="ECO:0000250" key="1"/>
<evidence type="ECO:0000255" key="2">
    <source>
        <dbReference type="PROSITE-ProRule" id="PRU00088"/>
    </source>
</evidence>
<evidence type="ECO:0000305" key="3"/>
<proteinExistence type="inferred from homology"/>
<protein>
    <recommendedName>
        <fullName>Flavodoxin</fullName>
    </recommendedName>
</protein>
<name>FLAV_HAEIN</name>
<accession>P44562</accession>
<keyword id="KW-0249">Electron transport</keyword>
<keyword id="KW-0285">Flavoprotein</keyword>
<keyword id="KW-0288">FMN</keyword>
<keyword id="KW-1185">Reference proteome</keyword>
<keyword id="KW-0813">Transport</keyword>